<feature type="chain" id="PRO_0000276363" description="Large ribosomal subunit protein uL14c">
    <location>
        <begin position="1"/>
        <end position="122"/>
    </location>
</feature>
<accession>Q3ZJ83</accession>
<dbReference type="EMBL" id="AY835431">
    <property type="protein sequence ID" value="AAV80608.1"/>
    <property type="molecule type" value="Genomic_DNA"/>
</dbReference>
<dbReference type="RefSeq" id="YP_636184.1">
    <property type="nucleotide sequence ID" value="NC_008114.1"/>
</dbReference>
<dbReference type="SMR" id="Q3ZJ83"/>
<dbReference type="GeneID" id="4108788"/>
<dbReference type="GO" id="GO:0009507">
    <property type="term" value="C:chloroplast"/>
    <property type="evidence" value="ECO:0007669"/>
    <property type="project" value="UniProtKB-SubCell"/>
</dbReference>
<dbReference type="GO" id="GO:0022625">
    <property type="term" value="C:cytosolic large ribosomal subunit"/>
    <property type="evidence" value="ECO:0007669"/>
    <property type="project" value="TreeGrafter"/>
</dbReference>
<dbReference type="GO" id="GO:0070180">
    <property type="term" value="F:large ribosomal subunit rRNA binding"/>
    <property type="evidence" value="ECO:0007669"/>
    <property type="project" value="TreeGrafter"/>
</dbReference>
<dbReference type="GO" id="GO:0003735">
    <property type="term" value="F:structural constituent of ribosome"/>
    <property type="evidence" value="ECO:0007669"/>
    <property type="project" value="InterPro"/>
</dbReference>
<dbReference type="GO" id="GO:0006412">
    <property type="term" value="P:translation"/>
    <property type="evidence" value="ECO:0007669"/>
    <property type="project" value="UniProtKB-UniRule"/>
</dbReference>
<dbReference type="CDD" id="cd00337">
    <property type="entry name" value="Ribosomal_uL14"/>
    <property type="match status" value="1"/>
</dbReference>
<dbReference type="FunFam" id="2.40.150.20:FF:000001">
    <property type="entry name" value="50S ribosomal protein L14"/>
    <property type="match status" value="1"/>
</dbReference>
<dbReference type="Gene3D" id="2.40.150.20">
    <property type="entry name" value="Ribosomal protein L14"/>
    <property type="match status" value="1"/>
</dbReference>
<dbReference type="HAMAP" id="MF_01367">
    <property type="entry name" value="Ribosomal_uL14"/>
    <property type="match status" value="1"/>
</dbReference>
<dbReference type="InterPro" id="IPR000218">
    <property type="entry name" value="Ribosomal_uL14"/>
</dbReference>
<dbReference type="InterPro" id="IPR005745">
    <property type="entry name" value="Ribosomal_uL14_bac-type"/>
</dbReference>
<dbReference type="InterPro" id="IPR019972">
    <property type="entry name" value="Ribosomal_uL14_CS"/>
</dbReference>
<dbReference type="InterPro" id="IPR036853">
    <property type="entry name" value="Ribosomal_uL14_sf"/>
</dbReference>
<dbReference type="NCBIfam" id="TIGR01067">
    <property type="entry name" value="rplN_bact"/>
    <property type="match status" value="1"/>
</dbReference>
<dbReference type="PANTHER" id="PTHR11761">
    <property type="entry name" value="50S/60S RIBOSOMAL PROTEIN L14/L23"/>
    <property type="match status" value="1"/>
</dbReference>
<dbReference type="PANTHER" id="PTHR11761:SF3">
    <property type="entry name" value="LARGE RIBOSOMAL SUBUNIT PROTEIN UL14M"/>
    <property type="match status" value="1"/>
</dbReference>
<dbReference type="Pfam" id="PF00238">
    <property type="entry name" value="Ribosomal_L14"/>
    <property type="match status" value="1"/>
</dbReference>
<dbReference type="SMART" id="SM01374">
    <property type="entry name" value="Ribosomal_L14"/>
    <property type="match status" value="1"/>
</dbReference>
<dbReference type="SUPFAM" id="SSF50193">
    <property type="entry name" value="Ribosomal protein L14"/>
    <property type="match status" value="1"/>
</dbReference>
<dbReference type="PROSITE" id="PS00049">
    <property type="entry name" value="RIBOSOMAL_L14"/>
    <property type="match status" value="1"/>
</dbReference>
<evidence type="ECO:0000255" key="1">
    <source>
        <dbReference type="HAMAP-Rule" id="MF_01367"/>
    </source>
</evidence>
<evidence type="ECO:0000305" key="2"/>
<protein>
    <recommendedName>
        <fullName evidence="1">Large ribosomal subunit protein uL14c</fullName>
    </recommendedName>
    <alternativeName>
        <fullName evidence="2">50S ribosomal protein L14, chloroplastic</fullName>
    </alternativeName>
</protein>
<sequence>MIRPQTILNVADNSGAKKLMCIRVLGGSYKQSANIGDIIIAVVKQATPNMPLKKSDKVRAVVVRTAQGVQRENGTFIRFDDNAAVVINKDDNPRGTRVFGPVARELRDRKFTKIVSLAPEVL</sequence>
<gene>
    <name evidence="1" type="primary">rpl14</name>
</gene>
<geneLocation type="chloroplast"/>
<name>RK14_TUPAK</name>
<keyword id="KW-0150">Chloroplast</keyword>
<keyword id="KW-0934">Plastid</keyword>
<keyword id="KW-0687">Ribonucleoprotein</keyword>
<keyword id="KW-0689">Ribosomal protein</keyword>
<keyword id="KW-0694">RNA-binding</keyword>
<keyword id="KW-0699">rRNA-binding</keyword>
<organism>
    <name type="scientific">Tupiella akineta</name>
    <name type="common">Green alga</name>
    <name type="synonym">Pseudendoclonium akinetum</name>
    <dbReference type="NCBI Taxonomy" id="160070"/>
    <lineage>
        <taxon>Eukaryota</taxon>
        <taxon>Viridiplantae</taxon>
        <taxon>Chlorophyta</taxon>
        <taxon>Ulvophyceae</taxon>
        <taxon>OUU clade</taxon>
        <taxon>Ulotrichales</taxon>
        <taxon>Tupiellaceae</taxon>
        <taxon>Tupiella</taxon>
    </lineage>
</organism>
<reference key="1">
    <citation type="journal article" date="2005" name="Mol. Biol. Evol.">
        <title>The chloroplast genome sequence of the green alga Pseudendoclonium akinetum (Ulvophyceae) reveals unusual structural features and new insights into the branching order of chlorophyte lineages.</title>
        <authorList>
            <person name="Pombert J.-F."/>
            <person name="Otis C."/>
            <person name="Lemieux C."/>
            <person name="Turmel M."/>
        </authorList>
    </citation>
    <scope>NUCLEOTIDE SEQUENCE [LARGE SCALE GENOMIC DNA]</scope>
    <source>
        <strain>UTEX 1912</strain>
    </source>
</reference>
<comment type="function">
    <text evidence="1">Binds to 23S rRNA.</text>
</comment>
<comment type="subunit">
    <text evidence="1">Part of the 50S ribosomal subunit.</text>
</comment>
<comment type="subcellular location">
    <subcellularLocation>
        <location>Plastid</location>
        <location>Chloroplast</location>
    </subcellularLocation>
</comment>
<comment type="similarity">
    <text evidence="1">Belongs to the universal ribosomal protein uL14 family.</text>
</comment>
<proteinExistence type="inferred from homology"/>